<feature type="chain" id="PRO_1000198631" description="tRNA-specific 2-thiouridylase MnmA">
    <location>
        <begin position="1"/>
        <end position="373"/>
    </location>
</feature>
<feature type="region of interest" description="Interaction with target base in tRNA" evidence="1">
    <location>
        <begin position="98"/>
        <end position="100"/>
    </location>
</feature>
<feature type="region of interest" description="Interaction with tRNA" evidence="1">
    <location>
        <begin position="150"/>
        <end position="152"/>
    </location>
</feature>
<feature type="region of interest" description="Interaction with tRNA" evidence="1">
    <location>
        <begin position="312"/>
        <end position="313"/>
    </location>
</feature>
<feature type="active site" description="Nucleophile" evidence="1">
    <location>
        <position position="103"/>
    </location>
</feature>
<feature type="active site" description="Cysteine persulfide intermediate" evidence="1">
    <location>
        <position position="200"/>
    </location>
</feature>
<feature type="binding site" evidence="1">
    <location>
        <begin position="12"/>
        <end position="19"/>
    </location>
    <ligand>
        <name>ATP</name>
        <dbReference type="ChEBI" id="CHEBI:30616"/>
    </ligand>
</feature>
<feature type="binding site" evidence="1">
    <location>
        <position position="38"/>
    </location>
    <ligand>
        <name>ATP</name>
        <dbReference type="ChEBI" id="CHEBI:30616"/>
    </ligand>
</feature>
<feature type="binding site" evidence="1">
    <location>
        <position position="127"/>
    </location>
    <ligand>
        <name>ATP</name>
        <dbReference type="ChEBI" id="CHEBI:30616"/>
    </ligand>
</feature>
<feature type="site" description="Interaction with tRNA" evidence="1">
    <location>
        <position position="128"/>
    </location>
</feature>
<feature type="site" description="Interaction with tRNA" evidence="1">
    <location>
        <position position="344"/>
    </location>
</feature>
<feature type="disulfide bond" description="Alternate" evidence="1">
    <location>
        <begin position="103"/>
        <end position="200"/>
    </location>
</feature>
<organism>
    <name type="scientific">Streptococcus pneumoniae (strain JJA)</name>
    <dbReference type="NCBI Taxonomy" id="488222"/>
    <lineage>
        <taxon>Bacteria</taxon>
        <taxon>Bacillati</taxon>
        <taxon>Bacillota</taxon>
        <taxon>Bacilli</taxon>
        <taxon>Lactobacillales</taxon>
        <taxon>Streptococcaceae</taxon>
        <taxon>Streptococcus</taxon>
    </lineage>
</organism>
<protein>
    <recommendedName>
        <fullName evidence="1">tRNA-specific 2-thiouridylase MnmA</fullName>
        <ecNumber evidence="1">2.8.1.13</ecNumber>
    </recommendedName>
</protein>
<evidence type="ECO:0000255" key="1">
    <source>
        <dbReference type="HAMAP-Rule" id="MF_00144"/>
    </source>
</evidence>
<dbReference type="EC" id="2.8.1.13" evidence="1"/>
<dbReference type="EMBL" id="CP000919">
    <property type="protein sequence ID" value="ACO19116.1"/>
    <property type="molecule type" value="Genomic_DNA"/>
</dbReference>
<dbReference type="RefSeq" id="WP_001282972.1">
    <property type="nucleotide sequence ID" value="NC_012466.1"/>
</dbReference>
<dbReference type="SMR" id="C1CBU0"/>
<dbReference type="KEGG" id="sjj:SPJ_0151"/>
<dbReference type="HOGENOM" id="CLU_035188_1_0_9"/>
<dbReference type="Proteomes" id="UP000002206">
    <property type="component" value="Chromosome"/>
</dbReference>
<dbReference type="GO" id="GO:0005737">
    <property type="term" value="C:cytoplasm"/>
    <property type="evidence" value="ECO:0007669"/>
    <property type="project" value="UniProtKB-SubCell"/>
</dbReference>
<dbReference type="GO" id="GO:0005524">
    <property type="term" value="F:ATP binding"/>
    <property type="evidence" value="ECO:0007669"/>
    <property type="project" value="UniProtKB-KW"/>
</dbReference>
<dbReference type="GO" id="GO:0000049">
    <property type="term" value="F:tRNA binding"/>
    <property type="evidence" value="ECO:0007669"/>
    <property type="project" value="UniProtKB-KW"/>
</dbReference>
<dbReference type="GO" id="GO:0103016">
    <property type="term" value="F:tRNA-uridine 2-sulfurtransferase activity"/>
    <property type="evidence" value="ECO:0007669"/>
    <property type="project" value="UniProtKB-EC"/>
</dbReference>
<dbReference type="GO" id="GO:0002143">
    <property type="term" value="P:tRNA wobble position uridine thiolation"/>
    <property type="evidence" value="ECO:0007669"/>
    <property type="project" value="TreeGrafter"/>
</dbReference>
<dbReference type="CDD" id="cd01998">
    <property type="entry name" value="MnmA_TRMU-like"/>
    <property type="match status" value="1"/>
</dbReference>
<dbReference type="FunFam" id="2.30.30.280:FF:000001">
    <property type="entry name" value="tRNA-specific 2-thiouridylase MnmA"/>
    <property type="match status" value="1"/>
</dbReference>
<dbReference type="FunFam" id="2.40.30.10:FF:000023">
    <property type="entry name" value="tRNA-specific 2-thiouridylase MnmA"/>
    <property type="match status" value="1"/>
</dbReference>
<dbReference type="FunFam" id="3.40.50.620:FF:000004">
    <property type="entry name" value="tRNA-specific 2-thiouridylase MnmA"/>
    <property type="match status" value="1"/>
</dbReference>
<dbReference type="Gene3D" id="2.30.30.280">
    <property type="entry name" value="Adenine nucleotide alpha hydrolases-like domains"/>
    <property type="match status" value="1"/>
</dbReference>
<dbReference type="Gene3D" id="3.40.50.620">
    <property type="entry name" value="HUPs"/>
    <property type="match status" value="1"/>
</dbReference>
<dbReference type="Gene3D" id="2.40.30.10">
    <property type="entry name" value="Translation factors"/>
    <property type="match status" value="1"/>
</dbReference>
<dbReference type="HAMAP" id="MF_00144">
    <property type="entry name" value="tRNA_thiouridyl_MnmA"/>
    <property type="match status" value="1"/>
</dbReference>
<dbReference type="InterPro" id="IPR004506">
    <property type="entry name" value="MnmA-like"/>
</dbReference>
<dbReference type="InterPro" id="IPR046885">
    <property type="entry name" value="MnmA-like_C"/>
</dbReference>
<dbReference type="InterPro" id="IPR046884">
    <property type="entry name" value="MnmA-like_central"/>
</dbReference>
<dbReference type="InterPro" id="IPR023382">
    <property type="entry name" value="MnmA-like_central_sf"/>
</dbReference>
<dbReference type="InterPro" id="IPR014729">
    <property type="entry name" value="Rossmann-like_a/b/a_fold"/>
</dbReference>
<dbReference type="NCBIfam" id="NF001138">
    <property type="entry name" value="PRK00143.1"/>
    <property type="match status" value="1"/>
</dbReference>
<dbReference type="NCBIfam" id="TIGR00420">
    <property type="entry name" value="trmU"/>
    <property type="match status" value="1"/>
</dbReference>
<dbReference type="PANTHER" id="PTHR11933:SF5">
    <property type="entry name" value="MITOCHONDRIAL TRNA-SPECIFIC 2-THIOURIDYLASE 1"/>
    <property type="match status" value="1"/>
</dbReference>
<dbReference type="PANTHER" id="PTHR11933">
    <property type="entry name" value="TRNA 5-METHYLAMINOMETHYL-2-THIOURIDYLATE -METHYLTRANSFERASE"/>
    <property type="match status" value="1"/>
</dbReference>
<dbReference type="Pfam" id="PF03054">
    <property type="entry name" value="tRNA_Me_trans"/>
    <property type="match status" value="1"/>
</dbReference>
<dbReference type="Pfam" id="PF20258">
    <property type="entry name" value="tRNA_Me_trans_C"/>
    <property type="match status" value="1"/>
</dbReference>
<dbReference type="Pfam" id="PF20259">
    <property type="entry name" value="tRNA_Me_trans_M"/>
    <property type="match status" value="1"/>
</dbReference>
<dbReference type="SUPFAM" id="SSF52402">
    <property type="entry name" value="Adenine nucleotide alpha hydrolases-like"/>
    <property type="match status" value="1"/>
</dbReference>
<proteinExistence type="inferred from homology"/>
<gene>
    <name evidence="1" type="primary">mnmA</name>
    <name type="ordered locus">SPJ_0151</name>
</gene>
<reference key="1">
    <citation type="journal article" date="2010" name="Genome Biol.">
        <title>Structure and dynamics of the pan-genome of Streptococcus pneumoniae and closely related species.</title>
        <authorList>
            <person name="Donati C."/>
            <person name="Hiller N.L."/>
            <person name="Tettelin H."/>
            <person name="Muzzi A."/>
            <person name="Croucher N.J."/>
            <person name="Angiuoli S.V."/>
            <person name="Oggioni M."/>
            <person name="Dunning Hotopp J.C."/>
            <person name="Hu F.Z."/>
            <person name="Riley D.R."/>
            <person name="Covacci A."/>
            <person name="Mitchell T.J."/>
            <person name="Bentley S.D."/>
            <person name="Kilian M."/>
            <person name="Ehrlich G.D."/>
            <person name="Rappuoli R."/>
            <person name="Moxon E.R."/>
            <person name="Masignani V."/>
        </authorList>
    </citation>
    <scope>NUCLEOTIDE SEQUENCE [LARGE SCALE GENOMIC DNA]</scope>
    <source>
        <strain>JJA</strain>
    </source>
</reference>
<name>MNMA_STRZJ</name>
<comment type="function">
    <text evidence="1">Catalyzes the 2-thiolation of uridine at the wobble position (U34) of tRNA, leading to the formation of s(2)U34.</text>
</comment>
<comment type="catalytic activity">
    <reaction evidence="1">
        <text>S-sulfanyl-L-cysteinyl-[protein] + uridine(34) in tRNA + AH2 + ATP = 2-thiouridine(34) in tRNA + L-cysteinyl-[protein] + A + AMP + diphosphate + H(+)</text>
        <dbReference type="Rhea" id="RHEA:47032"/>
        <dbReference type="Rhea" id="RHEA-COMP:10131"/>
        <dbReference type="Rhea" id="RHEA-COMP:11726"/>
        <dbReference type="Rhea" id="RHEA-COMP:11727"/>
        <dbReference type="Rhea" id="RHEA-COMP:11728"/>
        <dbReference type="ChEBI" id="CHEBI:13193"/>
        <dbReference type="ChEBI" id="CHEBI:15378"/>
        <dbReference type="ChEBI" id="CHEBI:17499"/>
        <dbReference type="ChEBI" id="CHEBI:29950"/>
        <dbReference type="ChEBI" id="CHEBI:30616"/>
        <dbReference type="ChEBI" id="CHEBI:33019"/>
        <dbReference type="ChEBI" id="CHEBI:61963"/>
        <dbReference type="ChEBI" id="CHEBI:65315"/>
        <dbReference type="ChEBI" id="CHEBI:87170"/>
        <dbReference type="ChEBI" id="CHEBI:456215"/>
        <dbReference type="EC" id="2.8.1.13"/>
    </reaction>
</comment>
<comment type="subcellular location">
    <subcellularLocation>
        <location evidence="1">Cytoplasm</location>
    </subcellularLocation>
</comment>
<comment type="similarity">
    <text evidence="1">Belongs to the MnmA/TRMU family.</text>
</comment>
<sequence>MSDNSKTRVVVGMSGGVDSSVTALLLKEQGYDVIGIFMKNWDDTDENGVCTATEDYKDVVAVADQIGIPYYSVNFEKEYWDRVFEYFLAEYRAGRTPNPDVMCNKEIKFKAFLDYAITLGADYVATGHYARVVRDEDGTVHMLRGVDNGKDQTYFLSQLSQEQLQKTMFPLGHLEKPEVRKLAEEAGLSTAKKKDSTGICFIGEKNFKNFLSNYLPAQPGRMMTVDGRDMGEHAGLMYYTIGQRGGLGIGGQHGGDNAPWFVVGKALSKNILYVGQGFYHDSLMSTSLEASQVHFTCDMPEEFTLECTAKFRYRQPDSKVTVHVKGDKAEVIFAEPQRAITPGQAVVFYDGEECLGGGLIDNAYRDGQVCQYI</sequence>
<accession>C1CBU0</accession>
<keyword id="KW-0067">ATP-binding</keyword>
<keyword id="KW-0963">Cytoplasm</keyword>
<keyword id="KW-1015">Disulfide bond</keyword>
<keyword id="KW-0547">Nucleotide-binding</keyword>
<keyword id="KW-0694">RNA-binding</keyword>
<keyword id="KW-0808">Transferase</keyword>
<keyword id="KW-0819">tRNA processing</keyword>
<keyword id="KW-0820">tRNA-binding</keyword>